<name>PLB_KLULA</name>
<feature type="signal peptide" evidence="1">
    <location>
        <begin position="1"/>
        <end position="25"/>
    </location>
</feature>
<feature type="chain" id="PRO_0000024637" description="Lysophospholipase">
    <location>
        <begin position="26"/>
        <end position="640"/>
    </location>
</feature>
<feature type="domain" description="PLA2c" evidence="2">
    <location>
        <begin position="38"/>
        <end position="589"/>
    </location>
</feature>
<feature type="region of interest" description="Disordered" evidence="3">
    <location>
        <begin position="594"/>
        <end position="616"/>
    </location>
</feature>
<feature type="compositionally biased region" description="Low complexity" evidence="3">
    <location>
        <begin position="594"/>
        <end position="610"/>
    </location>
</feature>
<feature type="glycosylation site" description="N-linked (GlcNAc...) asparagine" evidence="1">
    <location>
        <position position="84"/>
    </location>
</feature>
<feature type="glycosylation site" description="N-linked (GlcNAc...) asparagine" evidence="1">
    <location>
        <position position="126"/>
    </location>
</feature>
<feature type="glycosylation site" description="N-linked (GlcNAc...) asparagine" evidence="1">
    <location>
        <position position="163"/>
    </location>
</feature>
<feature type="glycosylation site" description="N-linked (GlcNAc...) asparagine" evidence="1">
    <location>
        <position position="173"/>
    </location>
</feature>
<feature type="glycosylation site" description="N-linked (GlcNAc...) asparagine" evidence="1">
    <location>
        <position position="218"/>
    </location>
</feature>
<feature type="glycosylation site" description="N-linked (GlcNAc...) asparagine" evidence="1">
    <location>
        <position position="280"/>
    </location>
</feature>
<feature type="glycosylation site" description="N-linked (GlcNAc...) asparagine" evidence="1">
    <location>
        <position position="310"/>
    </location>
</feature>
<feature type="glycosylation site" description="N-linked (GlcNAc...) asparagine" evidence="1">
    <location>
        <position position="317"/>
    </location>
</feature>
<feature type="glycosylation site" description="N-linked (GlcNAc...) asparagine" evidence="1">
    <location>
        <position position="348"/>
    </location>
</feature>
<feature type="glycosylation site" description="N-linked (GlcNAc...) asparagine" evidence="1">
    <location>
        <position position="391"/>
    </location>
</feature>
<feature type="glycosylation site" description="N-linked (GlcNAc...) asparagine" evidence="1">
    <location>
        <position position="492"/>
    </location>
</feature>
<feature type="glycosylation site" description="N-linked (GlcNAc...) asparagine" evidence="1">
    <location>
        <position position="516"/>
    </location>
</feature>
<feature type="glycosylation site" description="N-linked (GlcNAc...) asparagine" evidence="1">
    <location>
        <position position="544"/>
    </location>
</feature>
<feature type="glycosylation site" description="N-linked (GlcNAc...) asparagine" evidence="1">
    <location>
        <position position="568"/>
    </location>
</feature>
<feature type="glycosylation site" description="N-linked (GlcNAc...) asparagine" evidence="1">
    <location>
        <position position="585"/>
    </location>
</feature>
<feature type="mutagenesis site" description="Loss of activity." evidence="4">
    <original>R</original>
    <variation>A</variation>
    <location>
        <position position="112"/>
    </location>
</feature>
<feature type="mutagenesis site" description="Loss of activity." evidence="4">
    <original>D</original>
    <variation>A</variation>
    <location>
        <position position="406"/>
    </location>
</feature>
<proteinExistence type="evidence at protein level"/>
<reference key="1">
    <citation type="journal article" date="1999" name="Biosci. Biotechnol. Biochem.">
        <title>Purification and characterization of phospholipase B from Kluyveromyces lactis, and cloning of phospholipase B gene.</title>
        <authorList>
            <person name="Oishi H."/>
            <person name="Morimoto T."/>
            <person name="Watanabe Y."/>
            <person name="Tamai Y."/>
        </authorList>
    </citation>
    <scope>NUCLEOTIDE SEQUENCE [MRNA]</scope>
    <scope>CHARACTERIZATION</scope>
    <scope>MUTAGENESIS OF ARG-112 AND ASP-406</scope>
    <source>
        <strain>ATCC 56498 / CBS 683 / DSM 4394 / NBRC 1090 / NRRL Y-8279</strain>
    </source>
</reference>
<reference key="2">
    <citation type="journal article" date="2004" name="Nature">
        <title>Genome evolution in yeasts.</title>
        <authorList>
            <person name="Dujon B."/>
            <person name="Sherman D."/>
            <person name="Fischer G."/>
            <person name="Durrens P."/>
            <person name="Casaregola S."/>
            <person name="Lafontaine I."/>
            <person name="de Montigny J."/>
            <person name="Marck C."/>
            <person name="Neuveglise C."/>
            <person name="Talla E."/>
            <person name="Goffard N."/>
            <person name="Frangeul L."/>
            <person name="Aigle M."/>
            <person name="Anthouard V."/>
            <person name="Babour A."/>
            <person name="Barbe V."/>
            <person name="Barnay S."/>
            <person name="Blanchin S."/>
            <person name="Beckerich J.-M."/>
            <person name="Beyne E."/>
            <person name="Bleykasten C."/>
            <person name="Boisrame A."/>
            <person name="Boyer J."/>
            <person name="Cattolico L."/>
            <person name="Confanioleri F."/>
            <person name="de Daruvar A."/>
            <person name="Despons L."/>
            <person name="Fabre E."/>
            <person name="Fairhead C."/>
            <person name="Ferry-Dumazet H."/>
            <person name="Groppi A."/>
            <person name="Hantraye F."/>
            <person name="Hennequin C."/>
            <person name="Jauniaux N."/>
            <person name="Joyet P."/>
            <person name="Kachouri R."/>
            <person name="Kerrest A."/>
            <person name="Koszul R."/>
            <person name="Lemaire M."/>
            <person name="Lesur I."/>
            <person name="Ma L."/>
            <person name="Muller H."/>
            <person name="Nicaud J.-M."/>
            <person name="Nikolski M."/>
            <person name="Oztas S."/>
            <person name="Ozier-Kalogeropoulos O."/>
            <person name="Pellenz S."/>
            <person name="Potier S."/>
            <person name="Richard G.-F."/>
            <person name="Straub M.-L."/>
            <person name="Suleau A."/>
            <person name="Swennen D."/>
            <person name="Tekaia F."/>
            <person name="Wesolowski-Louvel M."/>
            <person name="Westhof E."/>
            <person name="Wirth B."/>
            <person name="Zeniou-Meyer M."/>
            <person name="Zivanovic Y."/>
            <person name="Bolotin-Fukuhara M."/>
            <person name="Thierry A."/>
            <person name="Bouchier C."/>
            <person name="Caudron B."/>
            <person name="Scarpelli C."/>
            <person name="Gaillardin C."/>
            <person name="Weissenbach J."/>
            <person name="Wincker P."/>
            <person name="Souciet J.-L."/>
        </authorList>
    </citation>
    <scope>NUCLEOTIDE SEQUENCE [LARGE SCALE GENOMIC DNA]</scope>
    <source>
        <strain>ATCC 8585 / CBS 2359 / DSM 70799 / NBRC 1267 / NRRL Y-1140 / WM37</strain>
    </source>
</reference>
<sequence length="640" mass="69983">MWFLNSVNLLFLVCSVALHLDAVNAWSPTNGYAPGVVDCDENINLVRKADAVSDDEADWLKVRHESTVPALKDFLQRGFKGFTNDTSIIDKLLATQDTAPKVAIACSGGGYRAMLSGAGMISAMDNRTDGANDHGLGGLLQSSTYLAGLSGGNWLVGTLAYNNWTSVQAIINNMTDDNSIWDISNSIVNPGGINIFSSISRWDDISDAVEEKKKAGFNTSITDVWGRALSYNFFPSLDEGGVGYTWNTLRDVDVFKNGEMPFPISVAVGRYPGTQVVNLNATVFEFNPFEMGSWDYTLHTFTDVRYAGTNVTNGTPNVTGKCVAGFDNTGFVMGTSSSLFNQFLLQLNTTDLPSFLYNLLHGFLTDASDDYDDISIWAPNPFYEITNIPSNYSQSISEDDTLYLVDGGEDGQNIPLTPLLQTEREIDVIFALDNSADTDQSWPDGFSLTQTYARQFGLQGKGIAFPYVPDVNTFTNLGLNTRPTFFGCDARNLTDLESIPPLVVYMPNTRESFNSNTSTFKMSYSTSERFKMIQNGFEAVTMKNLTKDENFMGCISCAILRRKQESLNYTLPSECDACFEKYCWNGTVDATTPISSTTSSSASSTSTSDSGNKENSARILAPRSTLSLLIGGLASVFISF</sequence>
<organism>
    <name type="scientific">Kluyveromyces lactis (strain ATCC 8585 / CBS 2359 / DSM 70799 / NBRC 1267 / NRRL Y-1140 / WM37)</name>
    <name type="common">Yeast</name>
    <name type="synonym">Candida sphaerica</name>
    <dbReference type="NCBI Taxonomy" id="284590"/>
    <lineage>
        <taxon>Eukaryota</taxon>
        <taxon>Fungi</taxon>
        <taxon>Dikarya</taxon>
        <taxon>Ascomycota</taxon>
        <taxon>Saccharomycotina</taxon>
        <taxon>Saccharomycetes</taxon>
        <taxon>Saccharomycetales</taxon>
        <taxon>Saccharomycetaceae</taxon>
        <taxon>Kluyveromyces</taxon>
    </lineage>
</organism>
<comment type="function">
    <text>Catalyzes the release of fatty acids from lysophospholipids. At acidic pH the enzyme hydrolyzes all phospholipid substrates without metal ion. On the other hand, at alkaline pH the enzyme shows substrate specificity for phosphatidylcholine and lysophosphatidylcholine and requires Ca(2+), Fe(3+), or Al(3+) for the activity.</text>
</comment>
<comment type="catalytic activity">
    <reaction>
        <text>a 1-acyl-sn-glycero-3-phosphocholine + H2O = sn-glycerol 3-phosphocholine + a fatty acid + H(+)</text>
        <dbReference type="Rhea" id="RHEA:15177"/>
        <dbReference type="ChEBI" id="CHEBI:15377"/>
        <dbReference type="ChEBI" id="CHEBI:15378"/>
        <dbReference type="ChEBI" id="CHEBI:16870"/>
        <dbReference type="ChEBI" id="CHEBI:28868"/>
        <dbReference type="ChEBI" id="CHEBI:58168"/>
        <dbReference type="EC" id="3.1.1.5"/>
    </reaction>
</comment>
<comment type="biophysicochemical properties">
    <phDependence>
        <text>Optimum pH is 2.0 and 7.5.</text>
    </phDependence>
</comment>
<comment type="subcellular location">
    <subcellularLocation>
        <location evidence="5">Secreted</location>
    </subcellularLocation>
</comment>
<comment type="PTM">
    <text>Highly glycosylated.</text>
</comment>
<comment type="similarity">
    <text evidence="5">Belongs to the lysophospholipase family.</text>
</comment>
<evidence type="ECO:0000255" key="1"/>
<evidence type="ECO:0000255" key="2">
    <source>
        <dbReference type="PROSITE-ProRule" id="PRU00555"/>
    </source>
</evidence>
<evidence type="ECO:0000256" key="3">
    <source>
        <dbReference type="SAM" id="MobiDB-lite"/>
    </source>
</evidence>
<evidence type="ECO:0000269" key="4">
    <source>
    </source>
</evidence>
<evidence type="ECO:0000305" key="5"/>
<protein>
    <recommendedName>
        <fullName>Lysophospholipase</fullName>
        <ecNumber>3.1.1.5</ecNumber>
    </recommendedName>
    <alternativeName>
        <fullName>KlPLB</fullName>
    </alternativeName>
    <alternativeName>
        <fullName>Phospholipase B</fullName>
    </alternativeName>
</protein>
<dbReference type="EC" id="3.1.1.5"/>
<dbReference type="EMBL" id="AB014495">
    <property type="protein sequence ID" value="BAA28619.1"/>
    <property type="molecule type" value="mRNA"/>
</dbReference>
<dbReference type="EMBL" id="CR382123">
    <property type="protein sequence ID" value="CAH01313.1"/>
    <property type="molecule type" value="Genomic_DNA"/>
</dbReference>
<dbReference type="RefSeq" id="XP_452462.1">
    <property type="nucleotide sequence ID" value="XM_452462.1"/>
</dbReference>
<dbReference type="SMR" id="O59863"/>
<dbReference type="FunCoup" id="O59863">
    <property type="interactions" value="112"/>
</dbReference>
<dbReference type="STRING" id="284590.O59863"/>
<dbReference type="GlyCosmos" id="O59863">
    <property type="glycosylation" value="15 sites, No reported glycans"/>
</dbReference>
<dbReference type="PaxDb" id="284590-O59863"/>
<dbReference type="KEGG" id="kla:KLLA0_C05940g"/>
<dbReference type="eggNOG" id="KOG1325">
    <property type="taxonomic scope" value="Eukaryota"/>
</dbReference>
<dbReference type="HOGENOM" id="CLU_014602_0_0_1"/>
<dbReference type="InParanoid" id="O59863"/>
<dbReference type="OMA" id="FGHINMS"/>
<dbReference type="BRENDA" id="3.1.1.5">
    <property type="organism ID" value="2825"/>
</dbReference>
<dbReference type="Proteomes" id="UP000000598">
    <property type="component" value="Chromosome C"/>
</dbReference>
<dbReference type="GO" id="GO:0005829">
    <property type="term" value="C:cytosol"/>
    <property type="evidence" value="ECO:0007669"/>
    <property type="project" value="TreeGrafter"/>
</dbReference>
<dbReference type="GO" id="GO:0005783">
    <property type="term" value="C:endoplasmic reticulum"/>
    <property type="evidence" value="ECO:0007669"/>
    <property type="project" value="TreeGrafter"/>
</dbReference>
<dbReference type="GO" id="GO:0005576">
    <property type="term" value="C:extracellular region"/>
    <property type="evidence" value="ECO:0007669"/>
    <property type="project" value="UniProtKB-SubCell"/>
</dbReference>
<dbReference type="GO" id="GO:0005886">
    <property type="term" value="C:plasma membrane"/>
    <property type="evidence" value="ECO:0007669"/>
    <property type="project" value="TreeGrafter"/>
</dbReference>
<dbReference type="GO" id="GO:0004622">
    <property type="term" value="F:lysophospholipase activity"/>
    <property type="evidence" value="ECO:0007669"/>
    <property type="project" value="UniProtKB-EC"/>
</dbReference>
<dbReference type="GO" id="GO:0004623">
    <property type="term" value="F:phospholipase A2 activity"/>
    <property type="evidence" value="ECO:0007669"/>
    <property type="project" value="TreeGrafter"/>
</dbReference>
<dbReference type="GO" id="GO:0046475">
    <property type="term" value="P:glycerophospholipid catabolic process"/>
    <property type="evidence" value="ECO:0007669"/>
    <property type="project" value="TreeGrafter"/>
</dbReference>
<dbReference type="CDD" id="cd07203">
    <property type="entry name" value="cPLA2_Fungal_PLB"/>
    <property type="match status" value="1"/>
</dbReference>
<dbReference type="FunFam" id="3.40.1090.10:FF:000010">
    <property type="entry name" value="Lysophospholipase"/>
    <property type="match status" value="1"/>
</dbReference>
<dbReference type="Gene3D" id="3.40.1090.10">
    <property type="entry name" value="Cytosolic phospholipase A2 catalytic domain"/>
    <property type="match status" value="1"/>
</dbReference>
<dbReference type="InterPro" id="IPR016035">
    <property type="entry name" value="Acyl_Trfase/lysoPLipase"/>
</dbReference>
<dbReference type="InterPro" id="IPR002642">
    <property type="entry name" value="LysoPLipase_cat_dom"/>
</dbReference>
<dbReference type="PANTHER" id="PTHR10728">
    <property type="entry name" value="CYTOSOLIC PHOSPHOLIPASE A2"/>
    <property type="match status" value="1"/>
</dbReference>
<dbReference type="PANTHER" id="PTHR10728:SF33">
    <property type="entry name" value="LYSOPHOSPHOLIPASE 1-RELATED"/>
    <property type="match status" value="1"/>
</dbReference>
<dbReference type="Pfam" id="PF01735">
    <property type="entry name" value="PLA2_B"/>
    <property type="match status" value="1"/>
</dbReference>
<dbReference type="SMART" id="SM00022">
    <property type="entry name" value="PLAc"/>
    <property type="match status" value="1"/>
</dbReference>
<dbReference type="SUPFAM" id="SSF52151">
    <property type="entry name" value="FabD/lysophospholipase-like"/>
    <property type="match status" value="1"/>
</dbReference>
<dbReference type="PROSITE" id="PS51210">
    <property type="entry name" value="PLA2C"/>
    <property type="match status" value="1"/>
</dbReference>
<gene>
    <name type="primary">PLB</name>
    <name type="ordered locus">KLLA0C05940g</name>
</gene>
<accession>O59863</accession>
<keyword id="KW-0325">Glycoprotein</keyword>
<keyword id="KW-0378">Hydrolase</keyword>
<keyword id="KW-0442">Lipid degradation</keyword>
<keyword id="KW-0443">Lipid metabolism</keyword>
<keyword id="KW-1185">Reference proteome</keyword>
<keyword id="KW-0964">Secreted</keyword>
<keyword id="KW-0732">Signal</keyword>